<proteinExistence type="evidence at protein level"/>
<feature type="chain" id="PRO_0000157096" description="tRNA(Phe) 7-((3-amino-3-carboxypropyl)-4-demethylwyosine(37)-N(4))-methyltransferase 1">
    <location>
        <begin position="1"/>
        <end position="196"/>
    </location>
</feature>
<feature type="strand" evidence="3">
    <location>
        <begin position="2"/>
        <end position="4"/>
    </location>
</feature>
<feature type="helix" evidence="3">
    <location>
        <begin position="7"/>
        <end position="23"/>
    </location>
</feature>
<feature type="turn" evidence="3">
    <location>
        <begin position="29"/>
        <end position="31"/>
    </location>
</feature>
<feature type="helix" evidence="3">
    <location>
        <begin position="32"/>
        <end position="40"/>
    </location>
</feature>
<feature type="strand" evidence="3">
    <location>
        <begin position="44"/>
        <end position="46"/>
    </location>
</feature>
<feature type="strand" evidence="3">
    <location>
        <begin position="53"/>
        <end position="59"/>
    </location>
</feature>
<feature type="strand" evidence="4">
    <location>
        <begin position="63"/>
        <end position="65"/>
    </location>
</feature>
<feature type="strand" evidence="3">
    <location>
        <begin position="69"/>
        <end position="76"/>
    </location>
</feature>
<feature type="helix" evidence="3">
    <location>
        <begin position="80"/>
        <end position="87"/>
    </location>
</feature>
<feature type="strand" evidence="3">
    <location>
        <begin position="92"/>
        <end position="100"/>
    </location>
</feature>
<feature type="strand" evidence="3">
    <location>
        <begin position="103"/>
        <end position="110"/>
    </location>
</feature>
<feature type="helix" evidence="3">
    <location>
        <begin position="111"/>
        <end position="123"/>
    </location>
</feature>
<feature type="strand" evidence="3">
    <location>
        <begin position="130"/>
        <end position="132"/>
    </location>
</feature>
<feature type="strand" evidence="3">
    <location>
        <begin position="140"/>
        <end position="144"/>
    </location>
</feature>
<feature type="strand" evidence="3">
    <location>
        <begin position="149"/>
        <end position="155"/>
    </location>
</feature>
<feature type="helix" evidence="3">
    <location>
        <begin position="163"/>
        <end position="190"/>
    </location>
</feature>
<feature type="helix" evidence="3">
    <location>
        <begin position="191"/>
        <end position="194"/>
    </location>
</feature>
<sequence>MRFTENFERAKKEALMSLEIALRKGEVDEDIIPLLKKINSIENYFTTSSCSGRISVMEMPHFGDKVNAKWLGKWHREVSLYEVLEAIKKHRSGQLWFLVRSPILHVGAKTLEDAVKLVNLAVSCGFKYSNIKSISNKKLIVEIRSTERMDVLLGENGEIFVGEEYLNKIVEIANDQMRRFKEKLKRLESKINALNR</sequence>
<keyword id="KW-0002">3D-structure</keyword>
<keyword id="KW-0489">Methyltransferase</keyword>
<keyword id="KW-0949">S-adenosyl-L-methionine</keyword>
<keyword id="KW-0808">Transferase</keyword>
<keyword id="KW-0819">tRNA processing</keyword>
<accession>O58796</accession>
<comment type="function">
    <text evidence="1">S-adenosyl-L-methionine-dependent methyltransferase that acts as a component of the wyosine derivatives biosynthesis pathway. Probably methylates N-4 position of wybutosine-86 to produce wybutosine-72.</text>
</comment>
<comment type="catalytic activity">
    <reaction evidence="1">
        <text>4-demethyl-7-[(3S)-3-amino-3-carboxypropyl]wyosine(37) in tRNA(Phe) + S-adenosyl-L-methionine = 7-[(3S)-3-amino-3-carboxypropyl]wyosine(37) in tRNA(Phe) + S-adenosyl-L-homocysteine + H(+)</text>
        <dbReference type="Rhea" id="RHEA:36635"/>
        <dbReference type="Rhea" id="RHEA-COMP:10378"/>
        <dbReference type="Rhea" id="RHEA-COMP:10379"/>
        <dbReference type="ChEBI" id="CHEBI:15378"/>
        <dbReference type="ChEBI" id="CHEBI:57856"/>
        <dbReference type="ChEBI" id="CHEBI:59789"/>
        <dbReference type="ChEBI" id="CHEBI:73543"/>
        <dbReference type="ChEBI" id="CHEBI:73550"/>
        <dbReference type="EC" id="2.1.1.282"/>
    </reaction>
</comment>
<comment type="similarity">
    <text evidence="1">Belongs to the TYW3 family.</text>
</comment>
<comment type="sequence caution" evidence="2">
    <conflict type="erroneous initiation">
        <sequence resource="EMBL-CDS" id="BAA30168"/>
    </conflict>
</comment>
<evidence type="ECO:0000255" key="1">
    <source>
        <dbReference type="HAMAP-Rule" id="MF_00266"/>
    </source>
</evidence>
<evidence type="ECO:0000305" key="2"/>
<evidence type="ECO:0007829" key="3">
    <source>
        <dbReference type="PDB" id="2IT2"/>
    </source>
</evidence>
<evidence type="ECO:0007829" key="4">
    <source>
        <dbReference type="PDB" id="2IT3"/>
    </source>
</evidence>
<organism>
    <name type="scientific">Pyrococcus horikoshii (strain ATCC 700860 / DSM 12428 / JCM 9974 / NBRC 100139 / OT-3)</name>
    <dbReference type="NCBI Taxonomy" id="70601"/>
    <lineage>
        <taxon>Archaea</taxon>
        <taxon>Methanobacteriati</taxon>
        <taxon>Methanobacteriota</taxon>
        <taxon>Thermococci</taxon>
        <taxon>Thermococcales</taxon>
        <taxon>Thermococcaceae</taxon>
        <taxon>Pyrococcus</taxon>
    </lineage>
</organism>
<protein>
    <recommendedName>
        <fullName evidence="1">tRNA(Phe) 7-((3-amino-3-carboxypropyl)-4-demethylwyosine(37)-N(4))-methyltransferase 1</fullName>
        <ecNumber evidence="1">2.1.1.282</ecNumber>
    </recommendedName>
    <alternativeName>
        <fullName evidence="1">tRNA wyosine derivatives biosynthesis protein Taw3 1</fullName>
    </alternativeName>
</protein>
<reference key="1">
    <citation type="journal article" date="1998" name="DNA Res.">
        <title>Complete sequence and gene organization of the genome of a hyper-thermophilic archaebacterium, Pyrococcus horikoshii OT3.</title>
        <authorList>
            <person name="Kawarabayasi Y."/>
            <person name="Sawada M."/>
            <person name="Horikawa H."/>
            <person name="Haikawa Y."/>
            <person name="Hino Y."/>
            <person name="Yamamoto S."/>
            <person name="Sekine M."/>
            <person name="Baba S."/>
            <person name="Kosugi H."/>
            <person name="Hosoyama A."/>
            <person name="Nagai Y."/>
            <person name="Sakai M."/>
            <person name="Ogura K."/>
            <person name="Otsuka R."/>
            <person name="Nakazawa H."/>
            <person name="Takamiya M."/>
            <person name="Ohfuku Y."/>
            <person name="Funahashi T."/>
            <person name="Tanaka T."/>
            <person name="Kudoh Y."/>
            <person name="Yamazaki J."/>
            <person name="Kushida N."/>
            <person name="Oguchi A."/>
            <person name="Aoki K."/>
            <person name="Yoshizawa T."/>
            <person name="Nakamura Y."/>
            <person name="Robb F.T."/>
            <person name="Horikoshi K."/>
            <person name="Masuchi Y."/>
            <person name="Shizuya H."/>
            <person name="Kikuchi H."/>
        </authorList>
    </citation>
    <scope>NUCLEOTIDE SEQUENCE [LARGE SCALE GENOMIC DNA]</scope>
    <source>
        <strain>ATCC 700860 / DSM 12428 / JCM 9974 / NBRC 100139 / OT-3</strain>
    </source>
</reference>
<reference key="2">
    <citation type="submission" date="2006-10" db="PDB data bank">
        <title>Structure of PH1069 protein from Pyrococcus horikoshii.</title>
        <authorList>
            <person name="Lokanath N.K."/>
            <person name="Kunishima N."/>
        </authorList>
    </citation>
    <scope>X-RAY CRYSTALLOGRAPHY (1.50 ANGSTROMS)</scope>
</reference>
<gene>
    <name evidence="1" type="primary">taw3-1</name>
    <name type="ordered locus">PH1069</name>
</gene>
<dbReference type="EC" id="2.1.1.282" evidence="1"/>
<dbReference type="EMBL" id="BA000001">
    <property type="protein sequence ID" value="BAA30168.1"/>
    <property type="status" value="ALT_INIT"/>
    <property type="molecule type" value="Genomic_DNA"/>
</dbReference>
<dbReference type="PIR" id="B71101">
    <property type="entry name" value="B71101"/>
</dbReference>
<dbReference type="PDB" id="2DRV">
    <property type="method" value="X-ray"/>
    <property type="resolution" value="1.60 A"/>
    <property type="chains" value="A/B=1-196"/>
</dbReference>
<dbReference type="PDB" id="2IT2">
    <property type="method" value="X-ray"/>
    <property type="resolution" value="1.50 A"/>
    <property type="chains" value="A/B=1-196"/>
</dbReference>
<dbReference type="PDB" id="2IT3">
    <property type="method" value="X-ray"/>
    <property type="resolution" value="2.10 A"/>
    <property type="chains" value="A/B=1-196"/>
</dbReference>
<dbReference type="PDBsum" id="2DRV"/>
<dbReference type="PDBsum" id="2IT2"/>
<dbReference type="PDBsum" id="2IT3"/>
<dbReference type="SMR" id="O58796"/>
<dbReference type="STRING" id="70601.gene:9378028"/>
<dbReference type="EnsemblBacteria" id="BAA30168">
    <property type="protein sequence ID" value="BAA30168"/>
    <property type="gene ID" value="BAA30168"/>
</dbReference>
<dbReference type="GeneID" id="1443391"/>
<dbReference type="KEGG" id="pho:PH1069"/>
<dbReference type="eggNOG" id="arCOG04156">
    <property type="taxonomic scope" value="Archaea"/>
</dbReference>
<dbReference type="OrthoDB" id="19299at2157"/>
<dbReference type="EvolutionaryTrace" id="O58796"/>
<dbReference type="Proteomes" id="UP000000752">
    <property type="component" value="Chromosome"/>
</dbReference>
<dbReference type="GO" id="GO:0008175">
    <property type="term" value="F:tRNA methyltransferase activity"/>
    <property type="evidence" value="ECO:0007669"/>
    <property type="project" value="InterPro"/>
</dbReference>
<dbReference type="GO" id="GO:0030488">
    <property type="term" value="P:tRNA methylation"/>
    <property type="evidence" value="ECO:0007669"/>
    <property type="project" value="InterPro"/>
</dbReference>
<dbReference type="GO" id="GO:0031591">
    <property type="term" value="P:wybutosine biosynthetic process"/>
    <property type="evidence" value="ECO:0007669"/>
    <property type="project" value="InterPro"/>
</dbReference>
<dbReference type="FunFam" id="3.30.1960.10:FF:000010">
    <property type="entry name" value="tRNA(Phe) 7-((3-amino-3-carboxypropyl)-4-demethylwyosine(37)-N(4))-methyltransferase 1"/>
    <property type="match status" value="1"/>
</dbReference>
<dbReference type="Gene3D" id="3.30.1960.10">
    <property type="entry name" value="tRNA wybutosine-synthesizing-like"/>
    <property type="match status" value="1"/>
</dbReference>
<dbReference type="HAMAP" id="MF_00266">
    <property type="entry name" value="TYW3_archaea"/>
    <property type="match status" value="1"/>
</dbReference>
<dbReference type="InterPro" id="IPR022908">
    <property type="entry name" value="Taw3"/>
</dbReference>
<dbReference type="InterPro" id="IPR003827">
    <property type="entry name" value="tRNA_yW-synthesising"/>
</dbReference>
<dbReference type="InterPro" id="IPR036602">
    <property type="entry name" value="tRNA_yW-synthesising-like_sf"/>
</dbReference>
<dbReference type="NCBIfam" id="NF003266">
    <property type="entry name" value="PRK04235.1-5"/>
    <property type="match status" value="1"/>
</dbReference>
<dbReference type="NCBIfam" id="NF003267">
    <property type="entry name" value="PRK04235.1-6"/>
    <property type="match status" value="1"/>
</dbReference>
<dbReference type="NCBIfam" id="NF047731">
    <property type="entry name" value="tRNAMtaseTaw3"/>
    <property type="match status" value="1"/>
</dbReference>
<dbReference type="PANTHER" id="PTHR48418">
    <property type="entry name" value="TRNA WYBUTOSINE-SYNTHESIZING PROTEIN 3"/>
    <property type="match status" value="1"/>
</dbReference>
<dbReference type="PANTHER" id="PTHR48418:SF1">
    <property type="entry name" value="TRNA WYBUTOSINE-SYNTHESIZING PROTEIN 3"/>
    <property type="match status" value="1"/>
</dbReference>
<dbReference type="Pfam" id="PF02676">
    <property type="entry name" value="TYW3"/>
    <property type="match status" value="1"/>
</dbReference>
<dbReference type="SUPFAM" id="SSF111278">
    <property type="entry name" value="SSo0622-like"/>
    <property type="match status" value="1"/>
</dbReference>
<name>TYW31_PYRHO</name>